<protein>
    <recommendedName>
        <fullName>Putative heat shock 70 kDa protein 7</fullName>
    </recommendedName>
    <alternativeName>
        <fullName>Heat shock 70 kDa protein B</fullName>
    </alternativeName>
    <alternativeName>
        <fullName>Heat shock protein family A member 7</fullName>
    </alternativeName>
</protein>
<keyword id="KW-0067">ATP-binding</keyword>
<keyword id="KW-0547">Nucleotide-binding</keyword>
<keyword id="KW-1267">Proteomics identification</keyword>
<keyword id="KW-1185">Reference proteome</keyword>
<keyword id="KW-0346">Stress response</keyword>
<organism>
    <name type="scientific">Homo sapiens</name>
    <name type="common">Human</name>
    <dbReference type="NCBI Taxonomy" id="9606"/>
    <lineage>
        <taxon>Eukaryota</taxon>
        <taxon>Metazoa</taxon>
        <taxon>Chordata</taxon>
        <taxon>Craniata</taxon>
        <taxon>Vertebrata</taxon>
        <taxon>Euteleostomi</taxon>
        <taxon>Mammalia</taxon>
        <taxon>Eutheria</taxon>
        <taxon>Euarchontoglires</taxon>
        <taxon>Primates</taxon>
        <taxon>Haplorrhini</taxon>
        <taxon>Catarrhini</taxon>
        <taxon>Hominidae</taxon>
        <taxon>Homo</taxon>
    </lineage>
</organism>
<sequence>MQAPRELAVGIDLGTTYSCVGVFQQGRVEILANDQGNRTTPSYVAFTDTERLVGDAAKSQAALNPHNTVFDAKRLIGRKFADTTVQSDMKHWPFQVVSEGGKPKVRVCYRGEDKTFYPEEISSMVLSKMKETAEAYLGQPVKHAVITVPTYFSNSQRQATKDAGAIAGLKVLPIINEATAAAIAYGLDRRGAGKRNVLIFDLGGGTFDVSVLSIDAGVFEVKATAGDTHLGGEDFDNRLVNHFMEEFRRKHGKDLSGNKRALRRLRTACERAKRTPSSSTQATLEIDSLFEGVDFYKSITRARFEELCSDLFRSTLEPVEKALRDAKLDKAQIHDFVLGGGLHSHPQGAEVAAGLLQRQGAEQEHQP</sequence>
<dbReference type="EMBL" id="AL451067">
    <property type="status" value="NOT_ANNOTATED_CDS"/>
    <property type="molecule type" value="Genomic_DNA"/>
</dbReference>
<dbReference type="EMBL" id="M11236">
    <property type="protein sequence ID" value="AAA52696.1"/>
    <property type="molecule type" value="Genomic_DNA"/>
</dbReference>
<dbReference type="PIR" id="A25773">
    <property type="entry name" value="A25773"/>
</dbReference>
<dbReference type="SMR" id="P48741"/>
<dbReference type="FunCoup" id="P48741">
    <property type="interactions" value="386"/>
</dbReference>
<dbReference type="IntAct" id="P48741">
    <property type="interactions" value="47"/>
</dbReference>
<dbReference type="GlyConnect" id="1695">
    <property type="glycosylation" value="1 N-Linked glycan (1 site)"/>
</dbReference>
<dbReference type="GlyGen" id="P48741">
    <property type="glycosylation" value="1 site, 1 O-linked glycan (1 site)"/>
</dbReference>
<dbReference type="iPTMnet" id="P48741"/>
<dbReference type="PhosphoSitePlus" id="P48741"/>
<dbReference type="SwissPalm" id="P48741"/>
<dbReference type="BioMuta" id="HGNC:5240"/>
<dbReference type="jPOST" id="P48741"/>
<dbReference type="MassIVE" id="P48741"/>
<dbReference type="PeptideAtlas" id="P48741"/>
<dbReference type="ProteomicsDB" id="55940"/>
<dbReference type="Pumba" id="P48741"/>
<dbReference type="AGR" id="HGNC:5240"/>
<dbReference type="GeneCards" id="HSPA7"/>
<dbReference type="HGNC" id="HGNC:5240">
    <property type="gene designation" value="HSPA7"/>
</dbReference>
<dbReference type="MIM" id="140556">
    <property type="type" value="gene"/>
</dbReference>
<dbReference type="neXtProt" id="NX_P48741"/>
<dbReference type="InParanoid" id="P48741"/>
<dbReference type="PAN-GO" id="P48741">
    <property type="GO annotations" value="15 GO annotations based on evolutionary models"/>
</dbReference>
<dbReference type="PhylomeDB" id="P48741"/>
<dbReference type="PathwayCommons" id="P48741"/>
<dbReference type="Reactome" id="R-HSA-3371453">
    <property type="pathway name" value="Regulation of HSF1-mediated heat shock response"/>
</dbReference>
<dbReference type="SignaLink" id="P48741"/>
<dbReference type="Pharos" id="P48741">
    <property type="development level" value="Tdark"/>
</dbReference>
<dbReference type="Proteomes" id="UP000005640">
    <property type="component" value="Unplaced"/>
</dbReference>
<dbReference type="RNAct" id="P48741">
    <property type="molecule type" value="protein"/>
</dbReference>
<dbReference type="GO" id="GO:0072562">
    <property type="term" value="C:blood microparticle"/>
    <property type="evidence" value="ECO:0007005"/>
    <property type="project" value="UniProtKB"/>
</dbReference>
<dbReference type="GO" id="GO:0005737">
    <property type="term" value="C:cytoplasm"/>
    <property type="evidence" value="ECO:0000318"/>
    <property type="project" value="GO_Central"/>
</dbReference>
<dbReference type="GO" id="GO:0005829">
    <property type="term" value="C:cytosol"/>
    <property type="evidence" value="ECO:0000318"/>
    <property type="project" value="GO_Central"/>
</dbReference>
<dbReference type="GO" id="GO:0070062">
    <property type="term" value="C:extracellular exosome"/>
    <property type="evidence" value="ECO:0007005"/>
    <property type="project" value="UniProtKB"/>
</dbReference>
<dbReference type="GO" id="GO:0005634">
    <property type="term" value="C:nucleus"/>
    <property type="evidence" value="ECO:0000318"/>
    <property type="project" value="GO_Central"/>
</dbReference>
<dbReference type="GO" id="GO:0005886">
    <property type="term" value="C:plasma membrane"/>
    <property type="evidence" value="ECO:0000318"/>
    <property type="project" value="GO_Central"/>
</dbReference>
<dbReference type="GO" id="GO:0005524">
    <property type="term" value="F:ATP binding"/>
    <property type="evidence" value="ECO:0007669"/>
    <property type="project" value="UniProtKB-KW"/>
</dbReference>
<dbReference type="GO" id="GO:0016887">
    <property type="term" value="F:ATP hydrolysis activity"/>
    <property type="evidence" value="ECO:0000318"/>
    <property type="project" value="GO_Central"/>
</dbReference>
<dbReference type="GO" id="GO:0140662">
    <property type="term" value="F:ATP-dependent protein folding chaperone"/>
    <property type="evidence" value="ECO:0007669"/>
    <property type="project" value="InterPro"/>
</dbReference>
<dbReference type="GO" id="GO:0031072">
    <property type="term" value="F:heat shock protein binding"/>
    <property type="evidence" value="ECO:0000318"/>
    <property type="project" value="GO_Central"/>
</dbReference>
<dbReference type="GO" id="GO:0044183">
    <property type="term" value="F:protein folding chaperone"/>
    <property type="evidence" value="ECO:0000318"/>
    <property type="project" value="GO_Central"/>
</dbReference>
<dbReference type="GO" id="GO:0051085">
    <property type="term" value="P:chaperone cofactor-dependent protein refolding"/>
    <property type="evidence" value="ECO:0000318"/>
    <property type="project" value="GO_Central"/>
</dbReference>
<dbReference type="GO" id="GO:0042026">
    <property type="term" value="P:protein refolding"/>
    <property type="evidence" value="ECO:0000318"/>
    <property type="project" value="GO_Central"/>
</dbReference>
<dbReference type="FunFam" id="3.30.420.40:FF:000172">
    <property type="entry name" value="Heat shock 70 kDa protein"/>
    <property type="match status" value="1"/>
</dbReference>
<dbReference type="FunFam" id="3.30.30.30:FF:000001">
    <property type="entry name" value="heat shock 70 kDa protein-like"/>
    <property type="match status" value="1"/>
</dbReference>
<dbReference type="FunFam" id="3.90.640.10:FF:000134">
    <property type="entry name" value="Heat shock cognate 71 kDa protein"/>
    <property type="match status" value="1"/>
</dbReference>
<dbReference type="FunFam" id="3.30.420.40:FF:000026">
    <property type="entry name" value="Heat shock protein 70"/>
    <property type="match status" value="1"/>
</dbReference>
<dbReference type="Gene3D" id="3.30.30.30">
    <property type="match status" value="1"/>
</dbReference>
<dbReference type="Gene3D" id="3.30.420.40">
    <property type="match status" value="2"/>
</dbReference>
<dbReference type="Gene3D" id="3.90.640.10">
    <property type="entry name" value="Actin, Chain A, domain 4"/>
    <property type="match status" value="1"/>
</dbReference>
<dbReference type="InterPro" id="IPR043129">
    <property type="entry name" value="ATPase_NBD"/>
</dbReference>
<dbReference type="InterPro" id="IPR018181">
    <property type="entry name" value="Heat_shock_70_CS"/>
</dbReference>
<dbReference type="InterPro" id="IPR013126">
    <property type="entry name" value="Hsp_70_fam"/>
</dbReference>
<dbReference type="PANTHER" id="PTHR19375">
    <property type="entry name" value="HEAT SHOCK PROTEIN 70KDA"/>
    <property type="match status" value="1"/>
</dbReference>
<dbReference type="Pfam" id="PF00012">
    <property type="entry name" value="HSP70"/>
    <property type="match status" value="1"/>
</dbReference>
<dbReference type="PRINTS" id="PR00301">
    <property type="entry name" value="HEATSHOCK70"/>
</dbReference>
<dbReference type="SUPFAM" id="SSF53067">
    <property type="entry name" value="Actin-like ATPase domain"/>
    <property type="match status" value="2"/>
</dbReference>
<dbReference type="PROSITE" id="PS00297">
    <property type="entry name" value="HSP70_1"/>
    <property type="match status" value="1"/>
</dbReference>
<dbReference type="PROSITE" id="PS00329">
    <property type="entry name" value="HSP70_2"/>
    <property type="match status" value="1"/>
</dbReference>
<evidence type="ECO:0000305" key="1"/>
<reference key="1">
    <citation type="journal article" date="2006" name="Nature">
        <title>The DNA sequence and biological annotation of human chromosome 1.</title>
        <authorList>
            <person name="Gregory S.G."/>
            <person name="Barlow K.F."/>
            <person name="McLay K.E."/>
            <person name="Kaul R."/>
            <person name="Swarbreck D."/>
            <person name="Dunham A."/>
            <person name="Scott C.E."/>
            <person name="Howe K.L."/>
            <person name="Woodfine K."/>
            <person name="Spencer C.C.A."/>
            <person name="Jones M.C."/>
            <person name="Gillson C."/>
            <person name="Searle S."/>
            <person name="Zhou Y."/>
            <person name="Kokocinski F."/>
            <person name="McDonald L."/>
            <person name="Evans R."/>
            <person name="Phillips K."/>
            <person name="Atkinson A."/>
            <person name="Cooper R."/>
            <person name="Jones C."/>
            <person name="Hall R.E."/>
            <person name="Andrews T.D."/>
            <person name="Lloyd C."/>
            <person name="Ainscough R."/>
            <person name="Almeida J.P."/>
            <person name="Ambrose K.D."/>
            <person name="Anderson F."/>
            <person name="Andrew R.W."/>
            <person name="Ashwell R.I.S."/>
            <person name="Aubin K."/>
            <person name="Babbage A.K."/>
            <person name="Bagguley C.L."/>
            <person name="Bailey J."/>
            <person name="Beasley H."/>
            <person name="Bethel G."/>
            <person name="Bird C.P."/>
            <person name="Bray-Allen S."/>
            <person name="Brown J.Y."/>
            <person name="Brown A.J."/>
            <person name="Buckley D."/>
            <person name="Burton J."/>
            <person name="Bye J."/>
            <person name="Carder C."/>
            <person name="Chapman J.C."/>
            <person name="Clark S.Y."/>
            <person name="Clarke G."/>
            <person name="Clee C."/>
            <person name="Cobley V."/>
            <person name="Collier R.E."/>
            <person name="Corby N."/>
            <person name="Coville G.J."/>
            <person name="Davies J."/>
            <person name="Deadman R."/>
            <person name="Dunn M."/>
            <person name="Earthrowl M."/>
            <person name="Ellington A.G."/>
            <person name="Errington H."/>
            <person name="Frankish A."/>
            <person name="Frankland J."/>
            <person name="French L."/>
            <person name="Garner P."/>
            <person name="Garnett J."/>
            <person name="Gay L."/>
            <person name="Ghori M.R.J."/>
            <person name="Gibson R."/>
            <person name="Gilby L.M."/>
            <person name="Gillett W."/>
            <person name="Glithero R.J."/>
            <person name="Grafham D.V."/>
            <person name="Griffiths C."/>
            <person name="Griffiths-Jones S."/>
            <person name="Grocock R."/>
            <person name="Hammond S."/>
            <person name="Harrison E.S.I."/>
            <person name="Hart E."/>
            <person name="Haugen E."/>
            <person name="Heath P.D."/>
            <person name="Holmes S."/>
            <person name="Holt K."/>
            <person name="Howden P.J."/>
            <person name="Hunt A.R."/>
            <person name="Hunt S.E."/>
            <person name="Hunter G."/>
            <person name="Isherwood J."/>
            <person name="James R."/>
            <person name="Johnson C."/>
            <person name="Johnson D."/>
            <person name="Joy A."/>
            <person name="Kay M."/>
            <person name="Kershaw J.K."/>
            <person name="Kibukawa M."/>
            <person name="Kimberley A.M."/>
            <person name="King A."/>
            <person name="Knights A.J."/>
            <person name="Lad H."/>
            <person name="Laird G."/>
            <person name="Lawlor S."/>
            <person name="Leongamornlert D.A."/>
            <person name="Lloyd D.M."/>
            <person name="Loveland J."/>
            <person name="Lovell J."/>
            <person name="Lush M.J."/>
            <person name="Lyne R."/>
            <person name="Martin S."/>
            <person name="Mashreghi-Mohammadi M."/>
            <person name="Matthews L."/>
            <person name="Matthews N.S.W."/>
            <person name="McLaren S."/>
            <person name="Milne S."/>
            <person name="Mistry S."/>
            <person name="Moore M.J.F."/>
            <person name="Nickerson T."/>
            <person name="O'Dell C.N."/>
            <person name="Oliver K."/>
            <person name="Palmeiri A."/>
            <person name="Palmer S.A."/>
            <person name="Parker A."/>
            <person name="Patel D."/>
            <person name="Pearce A.V."/>
            <person name="Peck A.I."/>
            <person name="Pelan S."/>
            <person name="Phelps K."/>
            <person name="Phillimore B.J."/>
            <person name="Plumb R."/>
            <person name="Rajan J."/>
            <person name="Raymond C."/>
            <person name="Rouse G."/>
            <person name="Saenphimmachak C."/>
            <person name="Sehra H.K."/>
            <person name="Sheridan E."/>
            <person name="Shownkeen R."/>
            <person name="Sims S."/>
            <person name="Skuce C.D."/>
            <person name="Smith M."/>
            <person name="Steward C."/>
            <person name="Subramanian S."/>
            <person name="Sycamore N."/>
            <person name="Tracey A."/>
            <person name="Tromans A."/>
            <person name="Van Helmond Z."/>
            <person name="Wall M."/>
            <person name="Wallis J.M."/>
            <person name="White S."/>
            <person name="Whitehead S.L."/>
            <person name="Wilkinson J.E."/>
            <person name="Willey D.L."/>
            <person name="Williams H."/>
            <person name="Wilming L."/>
            <person name="Wray P.W."/>
            <person name="Wu Z."/>
            <person name="Coulson A."/>
            <person name="Vaudin M."/>
            <person name="Sulston J.E."/>
            <person name="Durbin R.M."/>
            <person name="Hubbard T."/>
            <person name="Wooster R."/>
            <person name="Dunham I."/>
            <person name="Carter N.P."/>
            <person name="McVean G."/>
            <person name="Ross M.T."/>
            <person name="Harrow J."/>
            <person name="Olson M.V."/>
            <person name="Beck S."/>
            <person name="Rogers J."/>
            <person name="Bentley D.R."/>
        </authorList>
    </citation>
    <scope>NUCLEOTIDE SEQUENCE [LARGE SCALE GENOMIC DNA]</scope>
</reference>
<reference key="2">
    <citation type="journal article" date="1985" name="Proc. Natl. Acad. Sci. U.S.A.">
        <title>Isolation and functional analysis of a human 70,000-dalton heat shock protein gene segment.</title>
        <authorList>
            <person name="Voellmy R."/>
            <person name="Ahmed A."/>
            <person name="Schiller P."/>
            <person name="Bromley P."/>
            <person name="Rungger D."/>
        </authorList>
    </citation>
    <scope>NUCLEOTIDE SEQUENCE [GENOMIC DNA] OF 1-247</scope>
</reference>
<proteinExistence type="uncertain"/>
<name>HSP77_HUMAN</name>
<comment type="similarity">
    <text evidence="1">Belongs to the heat shock protein 70 family.</text>
</comment>
<comment type="caution">
    <text evidence="1">Could be the product of a pseudogene.</text>
</comment>
<feature type="chain" id="PRO_0000078267" description="Putative heat shock 70 kDa protein 7">
    <location>
        <begin position="1"/>
        <end position="367"/>
    </location>
</feature>
<feature type="sequence conflict" description="In Ref. 2; AAA52696." evidence="1" ref="2">
    <original>S</original>
    <variation>N</variation>
    <location>
        <position position="59"/>
    </location>
</feature>
<feature type="sequence conflict" description="In Ref. 2; AAA52696." evidence="1" ref="2">
    <original>Q</original>
    <variation>K</variation>
    <location>
        <position position="95"/>
    </location>
</feature>
<feature type="sequence conflict" description="In Ref. 2; AAA52696." evidence="1" ref="2">
    <original>E</original>
    <variation>G</variation>
    <location>
        <position position="99"/>
    </location>
</feature>
<feature type="sequence conflict" description="In Ref. 2; AAA52696." evidence="1" ref="2">
    <original>S</original>
    <variation>T</variation>
    <location>
        <position position="127"/>
    </location>
</feature>
<feature type="sequence conflict" description="In Ref. 2; AAA52696." evidence="1" ref="2">
    <original>G</original>
    <variation>R</variation>
    <location>
        <position position="191"/>
    </location>
</feature>
<feature type="sequence conflict" description="In Ref. 2; AAA52696." evidence="1" ref="2">
    <original>S</original>
    <variation>T</variation>
    <location>
        <position position="213"/>
    </location>
</feature>
<accession>P48741</accession>
<accession>P19790</accession>
<gene>
    <name type="primary">HSPA7</name>
    <name type="synonym">HSP70B</name>
</gene>